<evidence type="ECO:0000255" key="1">
    <source>
        <dbReference type="HAMAP-Rule" id="MF_01454"/>
    </source>
</evidence>
<evidence type="ECO:0000255" key="2">
    <source>
        <dbReference type="PROSITE-ProRule" id="PRU01231"/>
    </source>
</evidence>
<evidence type="ECO:0000305" key="3"/>
<name>OBG_SYNAS</name>
<dbReference type="EC" id="3.6.5.-" evidence="1"/>
<dbReference type="EMBL" id="CP000252">
    <property type="protein sequence ID" value="ABC76587.1"/>
    <property type="status" value="ALT_INIT"/>
    <property type="molecule type" value="Genomic_DNA"/>
</dbReference>
<dbReference type="RefSeq" id="WP_011416621.1">
    <property type="nucleotide sequence ID" value="NC_007759.1"/>
</dbReference>
<dbReference type="SMR" id="Q2LR77"/>
<dbReference type="FunCoup" id="Q2LR77">
    <property type="interactions" value="467"/>
</dbReference>
<dbReference type="STRING" id="56780.SYN_01351"/>
<dbReference type="KEGG" id="sat:SYN_01351"/>
<dbReference type="eggNOG" id="COG0536">
    <property type="taxonomic scope" value="Bacteria"/>
</dbReference>
<dbReference type="HOGENOM" id="CLU_011747_2_0_7"/>
<dbReference type="InParanoid" id="Q2LR77"/>
<dbReference type="OrthoDB" id="9807318at2"/>
<dbReference type="Proteomes" id="UP000001933">
    <property type="component" value="Chromosome"/>
</dbReference>
<dbReference type="GO" id="GO:0005737">
    <property type="term" value="C:cytoplasm"/>
    <property type="evidence" value="ECO:0007669"/>
    <property type="project" value="UniProtKB-SubCell"/>
</dbReference>
<dbReference type="GO" id="GO:0005525">
    <property type="term" value="F:GTP binding"/>
    <property type="evidence" value="ECO:0007669"/>
    <property type="project" value="UniProtKB-UniRule"/>
</dbReference>
<dbReference type="GO" id="GO:0003924">
    <property type="term" value="F:GTPase activity"/>
    <property type="evidence" value="ECO:0007669"/>
    <property type="project" value="UniProtKB-UniRule"/>
</dbReference>
<dbReference type="GO" id="GO:0000287">
    <property type="term" value="F:magnesium ion binding"/>
    <property type="evidence" value="ECO:0007669"/>
    <property type="project" value="InterPro"/>
</dbReference>
<dbReference type="GO" id="GO:0042254">
    <property type="term" value="P:ribosome biogenesis"/>
    <property type="evidence" value="ECO:0007669"/>
    <property type="project" value="UniProtKB-UniRule"/>
</dbReference>
<dbReference type="CDD" id="cd01898">
    <property type="entry name" value="Obg"/>
    <property type="match status" value="1"/>
</dbReference>
<dbReference type="FunFam" id="2.70.210.12:FF:000001">
    <property type="entry name" value="GTPase Obg"/>
    <property type="match status" value="1"/>
</dbReference>
<dbReference type="Gene3D" id="2.70.210.12">
    <property type="entry name" value="GTP1/OBG domain"/>
    <property type="match status" value="1"/>
</dbReference>
<dbReference type="Gene3D" id="3.40.50.300">
    <property type="entry name" value="P-loop containing nucleotide triphosphate hydrolases"/>
    <property type="match status" value="1"/>
</dbReference>
<dbReference type="HAMAP" id="MF_01454">
    <property type="entry name" value="GTPase_Obg"/>
    <property type="match status" value="1"/>
</dbReference>
<dbReference type="InterPro" id="IPR031167">
    <property type="entry name" value="G_OBG"/>
</dbReference>
<dbReference type="InterPro" id="IPR006073">
    <property type="entry name" value="GTP-bd"/>
</dbReference>
<dbReference type="InterPro" id="IPR014100">
    <property type="entry name" value="GTP-bd_Obg/CgtA"/>
</dbReference>
<dbReference type="InterPro" id="IPR006074">
    <property type="entry name" value="GTP1-OBG_CS"/>
</dbReference>
<dbReference type="InterPro" id="IPR006169">
    <property type="entry name" value="GTP1_OBG_dom"/>
</dbReference>
<dbReference type="InterPro" id="IPR036726">
    <property type="entry name" value="GTP1_OBG_dom_sf"/>
</dbReference>
<dbReference type="InterPro" id="IPR045086">
    <property type="entry name" value="OBG_GTPase"/>
</dbReference>
<dbReference type="InterPro" id="IPR027417">
    <property type="entry name" value="P-loop_NTPase"/>
</dbReference>
<dbReference type="NCBIfam" id="TIGR02729">
    <property type="entry name" value="Obg_CgtA"/>
    <property type="match status" value="1"/>
</dbReference>
<dbReference type="NCBIfam" id="NF008954">
    <property type="entry name" value="PRK12296.1"/>
    <property type="match status" value="1"/>
</dbReference>
<dbReference type="NCBIfam" id="NF008955">
    <property type="entry name" value="PRK12297.1"/>
    <property type="match status" value="1"/>
</dbReference>
<dbReference type="NCBIfam" id="NF008956">
    <property type="entry name" value="PRK12299.1"/>
    <property type="match status" value="1"/>
</dbReference>
<dbReference type="PANTHER" id="PTHR11702">
    <property type="entry name" value="DEVELOPMENTALLY REGULATED GTP-BINDING PROTEIN-RELATED"/>
    <property type="match status" value="1"/>
</dbReference>
<dbReference type="PANTHER" id="PTHR11702:SF31">
    <property type="entry name" value="MITOCHONDRIAL RIBOSOME-ASSOCIATED GTPASE 2"/>
    <property type="match status" value="1"/>
</dbReference>
<dbReference type="Pfam" id="PF01018">
    <property type="entry name" value="GTP1_OBG"/>
    <property type="match status" value="1"/>
</dbReference>
<dbReference type="Pfam" id="PF01926">
    <property type="entry name" value="MMR_HSR1"/>
    <property type="match status" value="1"/>
</dbReference>
<dbReference type="PIRSF" id="PIRSF002401">
    <property type="entry name" value="GTP_bd_Obg/CgtA"/>
    <property type="match status" value="1"/>
</dbReference>
<dbReference type="PRINTS" id="PR00326">
    <property type="entry name" value="GTP1OBG"/>
</dbReference>
<dbReference type="SUPFAM" id="SSF82051">
    <property type="entry name" value="Obg GTP-binding protein N-terminal domain"/>
    <property type="match status" value="1"/>
</dbReference>
<dbReference type="SUPFAM" id="SSF52540">
    <property type="entry name" value="P-loop containing nucleoside triphosphate hydrolases"/>
    <property type="match status" value="1"/>
</dbReference>
<dbReference type="PROSITE" id="PS51710">
    <property type="entry name" value="G_OBG"/>
    <property type="match status" value="1"/>
</dbReference>
<dbReference type="PROSITE" id="PS00905">
    <property type="entry name" value="GTP1_OBG"/>
    <property type="match status" value="1"/>
</dbReference>
<dbReference type="PROSITE" id="PS51883">
    <property type="entry name" value="OBG"/>
    <property type="match status" value="1"/>
</dbReference>
<proteinExistence type="inferred from homology"/>
<sequence>MKFIDEAKIYVKAGDGGRGCVSFRREKYVPFGGPNGGDGGKGGDVVIVATSSHNTLLDLKYKQHHVAKHGGHGEGSNRTGRSAPDLTIPVPVGTLVMDSESGEILADLVTEGQEYIVAHGGIGGRGNARFATATNQAPRYAQSGIPGEERWIRLELKLLADVGIIGLPNVGKSTFISRVSAARPKIADYPFTTLTPHLGVVRYGDDLNTFVLADIPGLIEGAHEGVGMGIQFLRHIERTALLLHIIDISRDETSTGWHDFEVINSELASYSPELILKPQIVAVNKTDLPITREKLKDTLRIFAEKGIVLYPFSAATGEGIPALLYKIGEALKNIRYRQTEHE</sequence>
<feature type="chain" id="PRO_0000386345" description="GTPase Obg">
    <location>
        <begin position="1"/>
        <end position="342"/>
    </location>
</feature>
<feature type="domain" description="Obg" evidence="2">
    <location>
        <begin position="1"/>
        <end position="159"/>
    </location>
</feature>
<feature type="domain" description="OBG-type G" evidence="1">
    <location>
        <begin position="160"/>
        <end position="332"/>
    </location>
</feature>
<feature type="binding site" evidence="1">
    <location>
        <begin position="166"/>
        <end position="173"/>
    </location>
    <ligand>
        <name>GTP</name>
        <dbReference type="ChEBI" id="CHEBI:37565"/>
    </ligand>
</feature>
<feature type="binding site" evidence="1">
    <location>
        <position position="173"/>
    </location>
    <ligand>
        <name>Mg(2+)</name>
        <dbReference type="ChEBI" id="CHEBI:18420"/>
    </ligand>
</feature>
<feature type="binding site" evidence="1">
    <location>
        <begin position="191"/>
        <end position="195"/>
    </location>
    <ligand>
        <name>GTP</name>
        <dbReference type="ChEBI" id="CHEBI:37565"/>
    </ligand>
</feature>
<feature type="binding site" evidence="1">
    <location>
        <position position="193"/>
    </location>
    <ligand>
        <name>Mg(2+)</name>
        <dbReference type="ChEBI" id="CHEBI:18420"/>
    </ligand>
</feature>
<feature type="binding site" evidence="1">
    <location>
        <begin position="214"/>
        <end position="217"/>
    </location>
    <ligand>
        <name>GTP</name>
        <dbReference type="ChEBI" id="CHEBI:37565"/>
    </ligand>
</feature>
<feature type="binding site" evidence="1">
    <location>
        <begin position="284"/>
        <end position="287"/>
    </location>
    <ligand>
        <name>GTP</name>
        <dbReference type="ChEBI" id="CHEBI:37565"/>
    </ligand>
</feature>
<feature type="binding site" evidence="1">
    <location>
        <begin position="313"/>
        <end position="315"/>
    </location>
    <ligand>
        <name>GTP</name>
        <dbReference type="ChEBI" id="CHEBI:37565"/>
    </ligand>
</feature>
<gene>
    <name evidence="1" type="primary">obg</name>
    <name type="ordered locus">SYNAS_07080</name>
    <name type="ORF">SYN_01351</name>
</gene>
<accession>Q2LR77</accession>
<protein>
    <recommendedName>
        <fullName evidence="1">GTPase Obg</fullName>
        <ecNumber evidence="1">3.6.5.-</ecNumber>
    </recommendedName>
    <alternativeName>
        <fullName evidence="1">GTP-binding protein Obg</fullName>
    </alternativeName>
</protein>
<reference key="1">
    <citation type="journal article" date="2007" name="Proc. Natl. Acad. Sci. U.S.A.">
        <title>The genome of Syntrophus aciditrophicus: life at the thermodynamic limit of microbial growth.</title>
        <authorList>
            <person name="McInerney M.J."/>
            <person name="Rohlin L."/>
            <person name="Mouttaki H."/>
            <person name="Kim U."/>
            <person name="Krupp R.S."/>
            <person name="Rios-Hernandez L."/>
            <person name="Sieber J."/>
            <person name="Struchtemeyer C.G."/>
            <person name="Bhattacharyya A."/>
            <person name="Campbell J.W."/>
            <person name="Gunsalus R.P."/>
        </authorList>
    </citation>
    <scope>NUCLEOTIDE SEQUENCE [LARGE SCALE GENOMIC DNA]</scope>
    <source>
        <strain>SB</strain>
    </source>
</reference>
<organism>
    <name type="scientific">Syntrophus aciditrophicus (strain SB)</name>
    <dbReference type="NCBI Taxonomy" id="56780"/>
    <lineage>
        <taxon>Bacteria</taxon>
        <taxon>Pseudomonadati</taxon>
        <taxon>Thermodesulfobacteriota</taxon>
        <taxon>Syntrophia</taxon>
        <taxon>Syntrophales</taxon>
        <taxon>Syntrophaceae</taxon>
        <taxon>Syntrophus</taxon>
    </lineage>
</organism>
<keyword id="KW-0963">Cytoplasm</keyword>
<keyword id="KW-0342">GTP-binding</keyword>
<keyword id="KW-0378">Hydrolase</keyword>
<keyword id="KW-0460">Magnesium</keyword>
<keyword id="KW-0479">Metal-binding</keyword>
<keyword id="KW-0547">Nucleotide-binding</keyword>
<keyword id="KW-1185">Reference proteome</keyword>
<comment type="function">
    <text evidence="1">An essential GTPase which binds GTP, GDP and possibly (p)ppGpp with moderate affinity, with high nucleotide exchange rates and a fairly low GTP hydrolysis rate. Plays a role in control of the cell cycle, stress response, ribosome biogenesis and in those bacteria that undergo differentiation, in morphogenesis control.</text>
</comment>
<comment type="cofactor">
    <cofactor evidence="1">
        <name>Mg(2+)</name>
        <dbReference type="ChEBI" id="CHEBI:18420"/>
    </cofactor>
</comment>
<comment type="subunit">
    <text evidence="1">Monomer.</text>
</comment>
<comment type="subcellular location">
    <subcellularLocation>
        <location evidence="1">Cytoplasm</location>
    </subcellularLocation>
</comment>
<comment type="similarity">
    <text evidence="1">Belongs to the TRAFAC class OBG-HflX-like GTPase superfamily. OBG GTPase family.</text>
</comment>
<comment type="sequence caution" evidence="3">
    <conflict type="erroneous initiation">
        <sequence resource="EMBL-CDS" id="ABC76587"/>
    </conflict>
    <text>Extended N-terminus.</text>
</comment>